<gene>
    <name evidence="1" type="primary">clcA</name>
    <name type="ordered locus">VV2_0540</name>
</gene>
<comment type="function">
    <text evidence="1">Proton-coupled chloride transporter. Functions as antiport system and exchanges two chloride ions for 1 proton. Probably acts as an electrical shunt for an outwardly-directed proton pump that is linked to amino acid decarboxylation, as part of the extreme acid resistance (XAR) response.</text>
</comment>
<comment type="catalytic activity">
    <reaction evidence="1">
        <text>2 chloride(in) + H(+)(out) = 2 chloride(out) + H(+)(in)</text>
        <dbReference type="Rhea" id="RHEA:29567"/>
        <dbReference type="ChEBI" id="CHEBI:15378"/>
        <dbReference type="ChEBI" id="CHEBI:17996"/>
    </reaction>
</comment>
<comment type="subunit">
    <text evidence="1">Homodimer.</text>
</comment>
<comment type="subcellular location">
    <subcellularLocation>
        <location evidence="1">Cell inner membrane</location>
        <topology evidence="1">Multi-pass membrane protein</topology>
    </subcellularLocation>
</comment>
<comment type="similarity">
    <text evidence="1">Belongs to the chloride channel (TC 2.A.49) family. ClcA subfamily.</text>
</comment>
<name>CLCA_VIBVU</name>
<evidence type="ECO:0000255" key="1">
    <source>
        <dbReference type="HAMAP-Rule" id="MF_01128"/>
    </source>
</evidence>
<protein>
    <recommendedName>
        <fullName evidence="1">H(+)/Cl(-) exchange transporter ClcA</fullName>
    </recommendedName>
</protein>
<reference key="1">
    <citation type="submission" date="2002-12" db="EMBL/GenBank/DDBJ databases">
        <title>Complete genome sequence of Vibrio vulnificus CMCP6.</title>
        <authorList>
            <person name="Rhee J.H."/>
            <person name="Kim S.Y."/>
            <person name="Chung S.S."/>
            <person name="Kim J.J."/>
            <person name="Moon Y.H."/>
            <person name="Jeong H."/>
            <person name="Choy H.E."/>
        </authorList>
    </citation>
    <scope>NUCLEOTIDE SEQUENCE [LARGE SCALE GENOMIC DNA]</scope>
    <source>
        <strain>CMCP6</strain>
    </source>
</reference>
<proteinExistence type="inferred from homology"/>
<keyword id="KW-0050">Antiport</keyword>
<keyword id="KW-0997">Cell inner membrane</keyword>
<keyword id="KW-1003">Cell membrane</keyword>
<keyword id="KW-0868">Chloride</keyword>
<keyword id="KW-0406">Ion transport</keyword>
<keyword id="KW-0472">Membrane</keyword>
<keyword id="KW-0812">Transmembrane</keyword>
<keyword id="KW-1133">Transmembrane helix</keyword>
<keyword id="KW-0813">Transport</keyword>
<dbReference type="EMBL" id="AE016796">
    <property type="protein sequence ID" value="AAO07489.1"/>
    <property type="molecule type" value="Genomic_DNA"/>
</dbReference>
<dbReference type="RefSeq" id="WP_011081486.1">
    <property type="nucleotide sequence ID" value="NC_004460.2"/>
</dbReference>
<dbReference type="SMR" id="Q8D6J0"/>
<dbReference type="KEGG" id="vvu:VV2_0540"/>
<dbReference type="HOGENOM" id="CLU_015263_7_0_6"/>
<dbReference type="Proteomes" id="UP000002275">
    <property type="component" value="Chromosome 2"/>
</dbReference>
<dbReference type="GO" id="GO:0005886">
    <property type="term" value="C:plasma membrane"/>
    <property type="evidence" value="ECO:0007669"/>
    <property type="project" value="UniProtKB-SubCell"/>
</dbReference>
<dbReference type="GO" id="GO:0015297">
    <property type="term" value="F:antiporter activity"/>
    <property type="evidence" value="ECO:0007669"/>
    <property type="project" value="UniProtKB-UniRule"/>
</dbReference>
<dbReference type="GO" id="GO:0005247">
    <property type="term" value="F:voltage-gated chloride channel activity"/>
    <property type="evidence" value="ECO:0007669"/>
    <property type="project" value="TreeGrafter"/>
</dbReference>
<dbReference type="CDD" id="cd01031">
    <property type="entry name" value="EriC"/>
    <property type="match status" value="1"/>
</dbReference>
<dbReference type="Gene3D" id="1.10.3080.10">
    <property type="entry name" value="Clc chloride channel"/>
    <property type="match status" value="1"/>
</dbReference>
<dbReference type="HAMAP" id="MF_01128">
    <property type="entry name" value="CLC_ClcA"/>
    <property type="match status" value="1"/>
</dbReference>
<dbReference type="InterPro" id="IPR023861">
    <property type="entry name" value="Cl-channel_ClcA"/>
</dbReference>
<dbReference type="InterPro" id="IPR014743">
    <property type="entry name" value="Cl-channel_core"/>
</dbReference>
<dbReference type="InterPro" id="IPR001807">
    <property type="entry name" value="ClC"/>
</dbReference>
<dbReference type="NCBIfam" id="NF003640">
    <property type="entry name" value="PRK05277.1"/>
    <property type="match status" value="1"/>
</dbReference>
<dbReference type="PANTHER" id="PTHR45711">
    <property type="entry name" value="CHLORIDE CHANNEL PROTEIN"/>
    <property type="match status" value="1"/>
</dbReference>
<dbReference type="PANTHER" id="PTHR45711:SF6">
    <property type="entry name" value="CHLORIDE CHANNEL PROTEIN"/>
    <property type="match status" value="1"/>
</dbReference>
<dbReference type="Pfam" id="PF00654">
    <property type="entry name" value="Voltage_CLC"/>
    <property type="match status" value="1"/>
</dbReference>
<dbReference type="PRINTS" id="PR00762">
    <property type="entry name" value="CLCHANNEL"/>
</dbReference>
<dbReference type="SUPFAM" id="SSF81340">
    <property type="entry name" value="Clc chloride channel"/>
    <property type="match status" value="1"/>
</dbReference>
<organism>
    <name type="scientific">Vibrio vulnificus (strain CMCP6)</name>
    <dbReference type="NCBI Taxonomy" id="216895"/>
    <lineage>
        <taxon>Bacteria</taxon>
        <taxon>Pseudomonadati</taxon>
        <taxon>Pseudomonadota</taxon>
        <taxon>Gammaproteobacteria</taxon>
        <taxon>Vibrionales</taxon>
        <taxon>Vibrionaceae</taxon>
        <taxon>Vibrio</taxon>
    </lineage>
</organism>
<sequence length="467" mass="50165">MTKRERIIQSVLVKVPKDAINQFLSHGSTPISVLFLAALVGVLAGLVGTYFEIAVHFVSETRTEWLKSEIGHLLPLWLAAILISAALAFVGYFLVHRFAPEAAGSGIPEIEGAMDNIRPVRWWRVIPVKFFGGMGALGSGMVLGREGPTVQMGGAVGRMVTDIFRVKDDDTRHSLLASGAAGGLAAAFNAPLAGIMFVVEEMRPQFRYSLISIRAVIISAVMANIVFRAINGQDAVITMPQYQPPELKALWLFLLLGGLFGVFGVLFNKLVTVAQDAFVALHKNDRKRYLITGTCLGGIFGLLLLYVPELTGGGIHLIPDVTNGNYSVSLLVMLFVGRVLTTLICFGSGAPGGIFAPMLALGTLFGYAFGATAKILLPDLPIEPGMFAIAGMGALFAATVRAPITGILLVIEMTNNYYLILPLIITSLGAVICAQICGGKPIYSQLLHRTIKNDKLRQQDLPEQQNS</sequence>
<accession>Q8D6J0</accession>
<feature type="chain" id="PRO_0000094482" description="H(+)/Cl(-) exchange transporter ClcA">
    <location>
        <begin position="1"/>
        <end position="467"/>
    </location>
</feature>
<feature type="topological domain" description="Cytoplasmic" evidence="1">
    <location>
        <begin position="1"/>
        <end position="30"/>
    </location>
</feature>
<feature type="transmembrane region" description="Helical" evidence="1">
    <location>
        <begin position="31"/>
        <end position="67"/>
    </location>
</feature>
<feature type="topological domain" description="Periplasmic" evidence="1">
    <location>
        <begin position="68"/>
        <end position="74"/>
    </location>
</feature>
<feature type="transmembrane region" description="Helical" evidence="1">
    <location>
        <begin position="75"/>
        <end position="98"/>
    </location>
</feature>
<feature type="intramembrane region" description="Helical" evidence="1">
    <location>
        <begin position="107"/>
        <end position="114"/>
    </location>
</feature>
<feature type="topological domain" description="Cytoplasmic" evidence="1">
    <location>
        <begin position="115"/>
        <end position="121"/>
    </location>
</feature>
<feature type="transmembrane region" description="Helical" evidence="1">
    <location>
        <begin position="122"/>
        <end position="139"/>
    </location>
</feature>
<feature type="transmembrane region" description="Helical" evidence="1">
    <location>
        <begin position="146"/>
        <end position="164"/>
    </location>
</feature>
<feature type="topological domain" description="Cytoplasmic" evidence="1">
    <location>
        <begin position="165"/>
        <end position="174"/>
    </location>
</feature>
<feature type="intramembrane region" description="Helical" evidence="1">
    <location>
        <begin position="175"/>
        <end position="187"/>
    </location>
</feature>
<feature type="intramembrane region" description="Helical" evidence="1">
    <location>
        <begin position="191"/>
        <end position="199"/>
    </location>
</feature>
<feature type="topological domain" description="Cytoplasmic" evidence="1">
    <location>
        <begin position="200"/>
        <end position="212"/>
    </location>
</feature>
<feature type="transmembrane region" description="Helical" evidence="1">
    <location>
        <begin position="213"/>
        <end position="230"/>
    </location>
</feature>
<feature type="topological domain" description="Periplasmic" evidence="1">
    <location>
        <begin position="231"/>
        <end position="250"/>
    </location>
</feature>
<feature type="transmembrane region" description="Helical" evidence="1">
    <location>
        <begin position="251"/>
        <end position="279"/>
    </location>
</feature>
<feature type="topological domain" description="Cytoplasmic" evidence="1">
    <location>
        <begin position="280"/>
        <end position="285"/>
    </location>
</feature>
<feature type="transmembrane region" description="Helical" evidence="1">
    <location>
        <begin position="286"/>
        <end position="307"/>
    </location>
</feature>
<feature type="topological domain" description="Periplasmic" evidence="1">
    <location>
        <begin position="308"/>
        <end position="327"/>
    </location>
</feature>
<feature type="transmembrane region" description="Helical" evidence="1">
    <location>
        <begin position="328"/>
        <end position="347"/>
    </location>
</feature>
<feature type="transmembrane region" description="Helical" evidence="1">
    <location>
        <begin position="353"/>
        <end position="374"/>
    </location>
</feature>
<feature type="topological domain" description="Periplasmic" evidence="1">
    <location>
        <begin position="375"/>
        <end position="384"/>
    </location>
</feature>
<feature type="intramembrane region" description="Helical" evidence="1">
    <location>
        <begin position="385"/>
        <end position="399"/>
    </location>
</feature>
<feature type="intramembrane region" description="Note=Loop between two helices" evidence="1">
    <location>
        <begin position="400"/>
        <end position="402"/>
    </location>
</feature>
<feature type="intramembrane region" description="Helical" evidence="1">
    <location>
        <begin position="403"/>
        <end position="414"/>
    </location>
</feature>
<feature type="intramembrane region" description="Note=Loop between two helices" evidence="1">
    <location>
        <begin position="415"/>
        <end position="419"/>
    </location>
</feature>
<feature type="transmembrane region" description="Helical" evidence="1">
    <location>
        <begin position="420"/>
        <end position="436"/>
    </location>
</feature>
<feature type="topological domain" description="Cytoplasmic" evidence="1">
    <location>
        <begin position="437"/>
        <end position="467"/>
    </location>
</feature>
<feature type="short sequence motif" description="Selectivity filter part_1" evidence="1">
    <location>
        <begin position="104"/>
        <end position="108"/>
    </location>
</feature>
<feature type="short sequence motif" description="Selectivity filter part_2" evidence="1">
    <location>
        <begin position="144"/>
        <end position="148"/>
    </location>
</feature>
<feature type="short sequence motif" description="Selectivity filter part_3" evidence="1">
    <location>
        <begin position="353"/>
        <end position="357"/>
    </location>
</feature>
<feature type="binding site" evidence="1">
    <location>
        <position position="105"/>
    </location>
    <ligand>
        <name>chloride</name>
        <dbReference type="ChEBI" id="CHEBI:17996"/>
    </ligand>
</feature>
<feature type="binding site" evidence="1">
    <location>
        <position position="354"/>
    </location>
    <ligand>
        <name>chloride</name>
        <dbReference type="ChEBI" id="CHEBI:17996"/>
    </ligand>
</feature>
<feature type="binding site" evidence="1">
    <location>
        <position position="355"/>
    </location>
    <ligand>
        <name>chloride</name>
        <dbReference type="ChEBI" id="CHEBI:17996"/>
    </ligand>
</feature>
<feature type="binding site" evidence="1">
    <location>
        <position position="443"/>
    </location>
    <ligand>
        <name>chloride</name>
        <dbReference type="ChEBI" id="CHEBI:17996"/>
    </ligand>
</feature>
<feature type="site" description="Mediates proton transfer from the outer aqueous phase to the interior of the protein; involved in linking H(+) and Cl(-) transport" evidence="1">
    <location>
        <position position="146"/>
    </location>
</feature>
<feature type="site" description="Mediates proton transfer from the protein to the inner aqueous phase" evidence="1">
    <location>
        <position position="201"/>
    </location>
</feature>